<organism>
    <name type="scientific">Danio rerio</name>
    <name type="common">Zebrafish</name>
    <name type="synonym">Brachydanio rerio</name>
    <dbReference type="NCBI Taxonomy" id="7955"/>
    <lineage>
        <taxon>Eukaryota</taxon>
        <taxon>Metazoa</taxon>
        <taxon>Chordata</taxon>
        <taxon>Craniata</taxon>
        <taxon>Vertebrata</taxon>
        <taxon>Euteleostomi</taxon>
        <taxon>Actinopterygii</taxon>
        <taxon>Neopterygii</taxon>
        <taxon>Teleostei</taxon>
        <taxon>Ostariophysi</taxon>
        <taxon>Cypriniformes</taxon>
        <taxon>Danionidae</taxon>
        <taxon>Danioninae</taxon>
        <taxon>Danio</taxon>
    </lineage>
</organism>
<protein>
    <recommendedName>
        <fullName>Serine/threonine-protein kinase pdik1l</fullName>
        <ecNumber>2.7.11.1</ecNumber>
    </recommendedName>
</protein>
<sequence>MVSSQAKYELIQEVGRGSYGVVYEAVVRQTGARVAVEKIRCHSPENVELALREFWALSSIQSQHPNVIHLEECVLQRDALAQRMSHGSSSSLYLELVETSLKGEITFDPCCAYYMWFVMDFCDGGDMNAYLLSRKPSRKTNTSFMLQLGSALAFLHRNQIIHRDLKPDNILISQGRTPAGSPEPTLKVADFGLSKVCSGSGLNPEEPASVNKCFLSTACGTDFYMAPEVWEGHYTAKADIFALGVIIWAMVERITFVDVETQKELLGSYVQQGEDIVPLGEALLENPKMELNIPARKKSMNASMKQLIREMLSANPQERPDAFELELRLVRIACRELDWDT</sequence>
<dbReference type="EC" id="2.7.11.1"/>
<dbReference type="EMBL" id="BC108040">
    <property type="protein sequence ID" value="AAI08041.1"/>
    <property type="molecule type" value="mRNA"/>
</dbReference>
<dbReference type="RefSeq" id="NP_001032789.2">
    <property type="nucleotide sequence ID" value="NM_001037700.2"/>
</dbReference>
<dbReference type="SMR" id="Q32PP3"/>
<dbReference type="FunCoup" id="Q32PP3">
    <property type="interactions" value="551"/>
</dbReference>
<dbReference type="STRING" id="7955.ENSDARP00000073471"/>
<dbReference type="PaxDb" id="7955-ENSDARP00000073471"/>
<dbReference type="GeneID" id="569665"/>
<dbReference type="KEGG" id="dre:569665"/>
<dbReference type="AGR" id="ZFIN:ZDB-GENE-051113-236"/>
<dbReference type="CTD" id="149420"/>
<dbReference type="ZFIN" id="ZDB-GENE-051113-236">
    <property type="gene designation" value="pdik1l"/>
</dbReference>
<dbReference type="eggNOG" id="KOG0595">
    <property type="taxonomic scope" value="Eukaryota"/>
</dbReference>
<dbReference type="InParanoid" id="Q32PP3"/>
<dbReference type="OrthoDB" id="4062651at2759"/>
<dbReference type="PhylomeDB" id="Q32PP3"/>
<dbReference type="PRO" id="PR:Q32PP3"/>
<dbReference type="Proteomes" id="UP000000437">
    <property type="component" value="Chromosome 19"/>
</dbReference>
<dbReference type="GO" id="GO:0005737">
    <property type="term" value="C:cytoplasm"/>
    <property type="evidence" value="ECO:0000318"/>
    <property type="project" value="GO_Central"/>
</dbReference>
<dbReference type="GO" id="GO:0005634">
    <property type="term" value="C:nucleus"/>
    <property type="evidence" value="ECO:0000318"/>
    <property type="project" value="GO_Central"/>
</dbReference>
<dbReference type="GO" id="GO:0005524">
    <property type="term" value="F:ATP binding"/>
    <property type="evidence" value="ECO:0007669"/>
    <property type="project" value="UniProtKB-KW"/>
</dbReference>
<dbReference type="GO" id="GO:0004672">
    <property type="term" value="F:protein kinase activity"/>
    <property type="evidence" value="ECO:0000318"/>
    <property type="project" value="GO_Central"/>
</dbReference>
<dbReference type="GO" id="GO:0106310">
    <property type="term" value="F:protein serine kinase activity"/>
    <property type="evidence" value="ECO:0007669"/>
    <property type="project" value="RHEA"/>
</dbReference>
<dbReference type="GO" id="GO:0004674">
    <property type="term" value="F:protein serine/threonine kinase activity"/>
    <property type="evidence" value="ECO:0007669"/>
    <property type="project" value="UniProtKB-KW"/>
</dbReference>
<dbReference type="GO" id="GO:0010972">
    <property type="term" value="P:negative regulation of G2/M transition of mitotic cell cycle"/>
    <property type="evidence" value="ECO:0000318"/>
    <property type="project" value="GO_Central"/>
</dbReference>
<dbReference type="GO" id="GO:0110031">
    <property type="term" value="P:negative regulation of G2/MI transition of meiotic cell cycle"/>
    <property type="evidence" value="ECO:0000318"/>
    <property type="project" value="GO_Central"/>
</dbReference>
<dbReference type="CDD" id="cd13977">
    <property type="entry name" value="STKc_PDIK1L"/>
    <property type="match status" value="1"/>
</dbReference>
<dbReference type="FunFam" id="1.10.510.10:FF:000174">
    <property type="entry name" value="Serine/threonine-protein kinase PDIK1L"/>
    <property type="match status" value="1"/>
</dbReference>
<dbReference type="FunFam" id="3.30.200.20:FF:000165">
    <property type="entry name" value="Serine/threonine-protein kinase PDIK1L"/>
    <property type="match status" value="1"/>
</dbReference>
<dbReference type="Gene3D" id="3.30.200.20">
    <property type="entry name" value="Phosphorylase Kinase, domain 1"/>
    <property type="match status" value="1"/>
</dbReference>
<dbReference type="Gene3D" id="1.10.510.10">
    <property type="entry name" value="Transferase(Phosphotransferase) domain 1"/>
    <property type="match status" value="1"/>
</dbReference>
<dbReference type="InterPro" id="IPR050339">
    <property type="entry name" value="CC_SR_Kinase"/>
</dbReference>
<dbReference type="InterPro" id="IPR011009">
    <property type="entry name" value="Kinase-like_dom_sf"/>
</dbReference>
<dbReference type="InterPro" id="IPR000719">
    <property type="entry name" value="Prot_kinase_dom"/>
</dbReference>
<dbReference type="InterPro" id="IPR008271">
    <property type="entry name" value="Ser/Thr_kinase_AS"/>
</dbReference>
<dbReference type="PANTHER" id="PTHR11042">
    <property type="entry name" value="EUKARYOTIC TRANSLATION INITIATION FACTOR 2-ALPHA KINASE EIF2-ALPHA KINASE -RELATED"/>
    <property type="match status" value="1"/>
</dbReference>
<dbReference type="PANTHER" id="PTHR11042:SF58">
    <property type="entry name" value="SERINE_THREONINE-PROTEIN KINASE PDIK1L"/>
    <property type="match status" value="1"/>
</dbReference>
<dbReference type="Pfam" id="PF00069">
    <property type="entry name" value="Pkinase"/>
    <property type="match status" value="1"/>
</dbReference>
<dbReference type="PIRSF" id="PIRSF000654">
    <property type="entry name" value="Integrin-linked_kinase"/>
    <property type="match status" value="1"/>
</dbReference>
<dbReference type="SMART" id="SM00220">
    <property type="entry name" value="S_TKc"/>
    <property type="match status" value="1"/>
</dbReference>
<dbReference type="SUPFAM" id="SSF56112">
    <property type="entry name" value="Protein kinase-like (PK-like)"/>
    <property type="match status" value="1"/>
</dbReference>
<dbReference type="PROSITE" id="PS50011">
    <property type="entry name" value="PROTEIN_KINASE_DOM"/>
    <property type="match status" value="1"/>
</dbReference>
<dbReference type="PROSITE" id="PS00108">
    <property type="entry name" value="PROTEIN_KINASE_ST"/>
    <property type="match status" value="1"/>
</dbReference>
<accession>Q32PP3</accession>
<evidence type="ECO:0000250" key="1"/>
<evidence type="ECO:0000255" key="2">
    <source>
        <dbReference type="PROSITE-ProRule" id="PRU00159"/>
    </source>
</evidence>
<evidence type="ECO:0000255" key="3">
    <source>
        <dbReference type="PROSITE-ProRule" id="PRU10027"/>
    </source>
</evidence>
<evidence type="ECO:0000305" key="4"/>
<comment type="catalytic activity">
    <reaction>
        <text>L-seryl-[protein] + ATP = O-phospho-L-seryl-[protein] + ADP + H(+)</text>
        <dbReference type="Rhea" id="RHEA:17989"/>
        <dbReference type="Rhea" id="RHEA-COMP:9863"/>
        <dbReference type="Rhea" id="RHEA-COMP:11604"/>
        <dbReference type="ChEBI" id="CHEBI:15378"/>
        <dbReference type="ChEBI" id="CHEBI:29999"/>
        <dbReference type="ChEBI" id="CHEBI:30616"/>
        <dbReference type="ChEBI" id="CHEBI:83421"/>
        <dbReference type="ChEBI" id="CHEBI:456216"/>
        <dbReference type="EC" id="2.7.11.1"/>
    </reaction>
</comment>
<comment type="catalytic activity">
    <reaction>
        <text>L-threonyl-[protein] + ATP = O-phospho-L-threonyl-[protein] + ADP + H(+)</text>
        <dbReference type="Rhea" id="RHEA:46608"/>
        <dbReference type="Rhea" id="RHEA-COMP:11060"/>
        <dbReference type="Rhea" id="RHEA-COMP:11605"/>
        <dbReference type="ChEBI" id="CHEBI:15378"/>
        <dbReference type="ChEBI" id="CHEBI:30013"/>
        <dbReference type="ChEBI" id="CHEBI:30616"/>
        <dbReference type="ChEBI" id="CHEBI:61977"/>
        <dbReference type="ChEBI" id="CHEBI:456216"/>
        <dbReference type="EC" id="2.7.11.1"/>
    </reaction>
</comment>
<comment type="subcellular location">
    <subcellularLocation>
        <location evidence="1">Nucleus</location>
    </subcellularLocation>
</comment>
<comment type="similarity">
    <text evidence="2">Belongs to the protein kinase superfamily. Ser/Thr protein kinase family.</text>
</comment>
<comment type="caution">
    <text evidence="4">Glu-37 is present instead of the conserved Lys which is expected to be an active site residue. Lys-38 may fulfill that role.</text>
</comment>
<reference key="1">
    <citation type="submission" date="2005-10" db="EMBL/GenBank/DDBJ databases">
        <authorList>
            <consortium name="NIH - Zebrafish Gene Collection (ZGC) project"/>
        </authorList>
    </citation>
    <scope>NUCLEOTIDE SEQUENCE [LARGE SCALE MRNA]</scope>
    <source>
        <tissue>Ovary</tissue>
    </source>
</reference>
<keyword id="KW-0067">ATP-binding</keyword>
<keyword id="KW-0418">Kinase</keyword>
<keyword id="KW-0547">Nucleotide-binding</keyword>
<keyword id="KW-0539">Nucleus</keyword>
<keyword id="KW-1185">Reference proteome</keyword>
<keyword id="KW-0723">Serine/threonine-protein kinase</keyword>
<keyword id="KW-0808">Transferase</keyword>
<name>PDK1L_DANRE</name>
<feature type="chain" id="PRO_0000086497" description="Serine/threonine-protein kinase pdik1l">
    <location>
        <begin position="1"/>
        <end position="341"/>
    </location>
</feature>
<feature type="domain" description="Protein kinase" evidence="2">
    <location>
        <begin position="8"/>
        <end position="332"/>
    </location>
</feature>
<feature type="active site" description="Proton acceptor" evidence="2 3">
    <location>
        <position position="164"/>
    </location>
</feature>
<feature type="binding site" evidence="2">
    <location>
        <begin position="14"/>
        <end position="22"/>
    </location>
    <ligand>
        <name>ATP</name>
        <dbReference type="ChEBI" id="CHEBI:30616"/>
    </ligand>
</feature>
<gene>
    <name type="primary">pdik1l</name>
    <name type="ORF">zgc:123209</name>
</gene>
<proteinExistence type="evidence at transcript level"/>